<accession>Q9CGX9</accession>
<sequence length="305" mass="34613">MSFTSDVKKELTSNLATTGALLALVRMNGSVGIFNGLTLSITTENAGTAKYIYQMLRELYDVHAEIRVHQKTTLSKNRVYTVFITEGASELLDELSLADSLMLDNGVPEFVKNDEFIKKDYLRGAFLSAGSLHNPEKGEYQLSIASVYQEHAEDLQEIFRDFGLNARVIERKNRWILYLSKAEEIMDFLTLIGAMKARLKFEEAKIMREMRGLANRQSNFENANIAKSVMAAQEAINAIKFLNERKELEQLPENLKEIARVRLENPEATIKELGELLEPSLGKSGVNHRLRKLVEQANELRKIEN</sequence>
<organism>
    <name type="scientific">Lactococcus lactis subsp. lactis (strain IL1403)</name>
    <name type="common">Streptococcus lactis</name>
    <dbReference type="NCBI Taxonomy" id="272623"/>
    <lineage>
        <taxon>Bacteria</taxon>
        <taxon>Bacillati</taxon>
        <taxon>Bacillota</taxon>
        <taxon>Bacilli</taxon>
        <taxon>Lactobacillales</taxon>
        <taxon>Streptococcaceae</taxon>
        <taxon>Lactococcus</taxon>
    </lineage>
</organism>
<feature type="chain" id="PRO_0000376510" description="Probable cell division protein WhiA">
    <location>
        <begin position="1"/>
        <end position="305"/>
    </location>
</feature>
<feature type="DNA-binding region" description="H-T-H motif" evidence="1">
    <location>
        <begin position="269"/>
        <end position="302"/>
    </location>
</feature>
<proteinExistence type="inferred from homology"/>
<evidence type="ECO:0000255" key="1">
    <source>
        <dbReference type="HAMAP-Rule" id="MF_01420"/>
    </source>
</evidence>
<protein>
    <recommendedName>
        <fullName evidence="1">Probable cell division protein WhiA</fullName>
    </recommendedName>
</protein>
<name>WHIA_LACLA</name>
<gene>
    <name evidence="1" type="primary">whiA</name>
    <name type="ordered locus">LL0963</name>
    <name type="ORF">L190464</name>
</gene>
<keyword id="KW-0131">Cell cycle</keyword>
<keyword id="KW-0132">Cell division</keyword>
<keyword id="KW-0238">DNA-binding</keyword>
<keyword id="KW-1185">Reference proteome</keyword>
<comment type="function">
    <text evidence="1">Involved in cell division and chromosome segregation.</text>
</comment>
<comment type="similarity">
    <text evidence="1">Belongs to the WhiA family.</text>
</comment>
<dbReference type="EMBL" id="AE005176">
    <property type="protein sequence ID" value="AAK05061.1"/>
    <property type="molecule type" value="Genomic_DNA"/>
</dbReference>
<dbReference type="PIR" id="C86745">
    <property type="entry name" value="C86745"/>
</dbReference>
<dbReference type="RefSeq" id="NP_267119.1">
    <property type="nucleotide sequence ID" value="NC_002662.1"/>
</dbReference>
<dbReference type="RefSeq" id="WP_003130947.1">
    <property type="nucleotide sequence ID" value="NC_002662.1"/>
</dbReference>
<dbReference type="SMR" id="Q9CGX9"/>
<dbReference type="PaxDb" id="272623-L190464"/>
<dbReference type="EnsemblBacteria" id="AAK05061">
    <property type="protein sequence ID" value="AAK05061"/>
    <property type="gene ID" value="L190464"/>
</dbReference>
<dbReference type="KEGG" id="lla:L190464"/>
<dbReference type="PATRIC" id="fig|272623.7.peg.1030"/>
<dbReference type="eggNOG" id="COG1481">
    <property type="taxonomic scope" value="Bacteria"/>
</dbReference>
<dbReference type="HOGENOM" id="CLU_053282_0_0_9"/>
<dbReference type="OrthoDB" id="401278at2"/>
<dbReference type="Proteomes" id="UP000002196">
    <property type="component" value="Chromosome"/>
</dbReference>
<dbReference type="GO" id="GO:0003677">
    <property type="term" value="F:DNA binding"/>
    <property type="evidence" value="ECO:0007669"/>
    <property type="project" value="UniProtKB-UniRule"/>
</dbReference>
<dbReference type="GO" id="GO:0004519">
    <property type="term" value="F:endonuclease activity"/>
    <property type="evidence" value="ECO:0007669"/>
    <property type="project" value="InterPro"/>
</dbReference>
<dbReference type="GO" id="GO:0051301">
    <property type="term" value="P:cell division"/>
    <property type="evidence" value="ECO:0007669"/>
    <property type="project" value="UniProtKB-UniRule"/>
</dbReference>
<dbReference type="GO" id="GO:0043937">
    <property type="term" value="P:regulation of sporulation"/>
    <property type="evidence" value="ECO:0007669"/>
    <property type="project" value="InterPro"/>
</dbReference>
<dbReference type="Gene3D" id="3.10.28.10">
    <property type="entry name" value="Homing endonucleases"/>
    <property type="match status" value="1"/>
</dbReference>
<dbReference type="HAMAP" id="MF_01420">
    <property type="entry name" value="HTH_type_WhiA"/>
    <property type="match status" value="1"/>
</dbReference>
<dbReference type="InterPro" id="IPR027434">
    <property type="entry name" value="Homing_endonucl"/>
</dbReference>
<dbReference type="InterPro" id="IPR004042">
    <property type="entry name" value="Intein_endonuc_central"/>
</dbReference>
<dbReference type="InterPro" id="IPR018478">
    <property type="entry name" value="Sporu_reg_WhiA_N_dom"/>
</dbReference>
<dbReference type="InterPro" id="IPR003802">
    <property type="entry name" value="Sporulation_regulator_WhiA"/>
</dbReference>
<dbReference type="InterPro" id="IPR023054">
    <property type="entry name" value="Sporulation_regulator_WhiA_C"/>
</dbReference>
<dbReference type="InterPro" id="IPR039518">
    <property type="entry name" value="WhiA_LAGLIDADG_dom"/>
</dbReference>
<dbReference type="NCBIfam" id="TIGR00647">
    <property type="entry name" value="DNA_bind_WhiA"/>
    <property type="match status" value="1"/>
</dbReference>
<dbReference type="PANTHER" id="PTHR37307">
    <property type="entry name" value="CELL DIVISION PROTEIN WHIA-RELATED"/>
    <property type="match status" value="1"/>
</dbReference>
<dbReference type="PANTHER" id="PTHR37307:SF1">
    <property type="entry name" value="CELL DIVISION PROTEIN WHIA-RELATED"/>
    <property type="match status" value="1"/>
</dbReference>
<dbReference type="Pfam" id="PF02650">
    <property type="entry name" value="HTH_WhiA"/>
    <property type="match status" value="1"/>
</dbReference>
<dbReference type="Pfam" id="PF14527">
    <property type="entry name" value="LAGLIDADG_WhiA"/>
    <property type="match status" value="1"/>
</dbReference>
<dbReference type="Pfam" id="PF10298">
    <property type="entry name" value="WhiA_N"/>
    <property type="match status" value="1"/>
</dbReference>
<dbReference type="SUPFAM" id="SSF55608">
    <property type="entry name" value="Homing endonucleases"/>
    <property type="match status" value="1"/>
</dbReference>
<dbReference type="PROSITE" id="PS50819">
    <property type="entry name" value="INTEIN_ENDONUCLEASE"/>
    <property type="match status" value="1"/>
</dbReference>
<reference key="1">
    <citation type="journal article" date="2001" name="Genome Res.">
        <title>The complete genome sequence of the lactic acid bacterium Lactococcus lactis ssp. lactis IL1403.</title>
        <authorList>
            <person name="Bolotin A."/>
            <person name="Wincker P."/>
            <person name="Mauger S."/>
            <person name="Jaillon O."/>
            <person name="Malarme K."/>
            <person name="Weissenbach J."/>
            <person name="Ehrlich S.D."/>
            <person name="Sorokin A."/>
        </authorList>
    </citation>
    <scope>NUCLEOTIDE SEQUENCE [LARGE SCALE GENOMIC DNA]</scope>
    <source>
        <strain>IL1403</strain>
    </source>
</reference>